<reference key="1">
    <citation type="journal article" date="2009" name="PLoS Genet.">
        <title>Organised genome dynamics in the Escherichia coli species results in highly diverse adaptive paths.</title>
        <authorList>
            <person name="Touchon M."/>
            <person name="Hoede C."/>
            <person name="Tenaillon O."/>
            <person name="Barbe V."/>
            <person name="Baeriswyl S."/>
            <person name="Bidet P."/>
            <person name="Bingen E."/>
            <person name="Bonacorsi S."/>
            <person name="Bouchier C."/>
            <person name="Bouvet O."/>
            <person name="Calteau A."/>
            <person name="Chiapello H."/>
            <person name="Clermont O."/>
            <person name="Cruveiller S."/>
            <person name="Danchin A."/>
            <person name="Diard M."/>
            <person name="Dossat C."/>
            <person name="Karoui M.E."/>
            <person name="Frapy E."/>
            <person name="Garry L."/>
            <person name="Ghigo J.M."/>
            <person name="Gilles A.M."/>
            <person name="Johnson J."/>
            <person name="Le Bouguenec C."/>
            <person name="Lescat M."/>
            <person name="Mangenot S."/>
            <person name="Martinez-Jehanne V."/>
            <person name="Matic I."/>
            <person name="Nassif X."/>
            <person name="Oztas S."/>
            <person name="Petit M.A."/>
            <person name="Pichon C."/>
            <person name="Rouy Z."/>
            <person name="Ruf C.S."/>
            <person name="Schneider D."/>
            <person name="Tourret J."/>
            <person name="Vacherie B."/>
            <person name="Vallenet D."/>
            <person name="Medigue C."/>
            <person name="Rocha E.P.C."/>
            <person name="Denamur E."/>
        </authorList>
    </citation>
    <scope>NUCLEOTIDE SEQUENCE [LARGE SCALE GENOMIC DNA]</scope>
    <source>
        <strain>IAI1</strain>
    </source>
</reference>
<feature type="chain" id="PRO_1000188803" description="Acyl carrier protein phosphodiesterase">
    <location>
        <begin position="1"/>
        <end position="193"/>
    </location>
</feature>
<evidence type="ECO:0000255" key="1">
    <source>
        <dbReference type="HAMAP-Rule" id="MF_01950"/>
    </source>
</evidence>
<accession>B7M3P3</accession>
<dbReference type="EC" id="3.1.4.14" evidence="1"/>
<dbReference type="EMBL" id="CU928160">
    <property type="protein sequence ID" value="CAQ97276.1"/>
    <property type="molecule type" value="Genomic_DNA"/>
</dbReference>
<dbReference type="RefSeq" id="WP_001009884.1">
    <property type="nucleotide sequence ID" value="NC_011741.1"/>
</dbReference>
<dbReference type="SMR" id="B7M3P3"/>
<dbReference type="GeneID" id="93777056"/>
<dbReference type="KEGG" id="ecr:ECIAI1_0404"/>
<dbReference type="HOGENOM" id="CLU_099370_1_0_6"/>
<dbReference type="GO" id="GO:0008770">
    <property type="term" value="F:[acyl-carrier-protein] phosphodiesterase activity"/>
    <property type="evidence" value="ECO:0007669"/>
    <property type="project" value="UniProtKB-UniRule"/>
</dbReference>
<dbReference type="GO" id="GO:0006633">
    <property type="term" value="P:fatty acid biosynthetic process"/>
    <property type="evidence" value="ECO:0007669"/>
    <property type="project" value="UniProtKB-UniRule"/>
</dbReference>
<dbReference type="HAMAP" id="MF_01950">
    <property type="entry name" value="AcpH"/>
    <property type="match status" value="1"/>
</dbReference>
<dbReference type="InterPro" id="IPR007431">
    <property type="entry name" value="ACP_PD"/>
</dbReference>
<dbReference type="InterPro" id="IPR023491">
    <property type="entry name" value="ACP_phosphodiesterase_gpbac"/>
</dbReference>
<dbReference type="NCBIfam" id="NF007466">
    <property type="entry name" value="PRK10045.1"/>
    <property type="match status" value="1"/>
</dbReference>
<dbReference type="PANTHER" id="PTHR38764">
    <property type="entry name" value="ACYL CARRIER PROTEIN PHOSPHODIESTERASE"/>
    <property type="match status" value="1"/>
</dbReference>
<dbReference type="PANTHER" id="PTHR38764:SF1">
    <property type="entry name" value="ACYL CARRIER PROTEIN PHOSPHODIESTERASE"/>
    <property type="match status" value="1"/>
</dbReference>
<dbReference type="Pfam" id="PF04336">
    <property type="entry name" value="ACP_PD"/>
    <property type="match status" value="1"/>
</dbReference>
<dbReference type="PIRSF" id="PIRSF011489">
    <property type="entry name" value="DUF479"/>
    <property type="match status" value="1"/>
</dbReference>
<gene>
    <name evidence="1" type="primary">acpH</name>
    <name type="ordered locus">ECIAI1_0404</name>
</gene>
<organism>
    <name type="scientific">Escherichia coli O8 (strain IAI1)</name>
    <dbReference type="NCBI Taxonomy" id="585034"/>
    <lineage>
        <taxon>Bacteria</taxon>
        <taxon>Pseudomonadati</taxon>
        <taxon>Pseudomonadota</taxon>
        <taxon>Gammaproteobacteria</taxon>
        <taxon>Enterobacterales</taxon>
        <taxon>Enterobacteriaceae</taxon>
        <taxon>Escherichia</taxon>
    </lineage>
</organism>
<name>ACPH_ECO8A</name>
<keyword id="KW-0275">Fatty acid biosynthesis</keyword>
<keyword id="KW-0276">Fatty acid metabolism</keyword>
<keyword id="KW-0378">Hydrolase</keyword>
<keyword id="KW-0444">Lipid biosynthesis</keyword>
<keyword id="KW-0443">Lipid metabolism</keyword>
<comment type="function">
    <text evidence="1">Converts holo-ACP to apo-ACP by hydrolytic cleavage of the phosphopantetheine prosthetic group from ACP.</text>
</comment>
<comment type="catalytic activity">
    <reaction evidence="1">
        <text>holo-[ACP] + H2O = apo-[ACP] + (R)-4'-phosphopantetheine + H(+)</text>
        <dbReference type="Rhea" id="RHEA:20537"/>
        <dbReference type="Rhea" id="RHEA-COMP:9685"/>
        <dbReference type="Rhea" id="RHEA-COMP:9690"/>
        <dbReference type="ChEBI" id="CHEBI:15377"/>
        <dbReference type="ChEBI" id="CHEBI:15378"/>
        <dbReference type="ChEBI" id="CHEBI:29999"/>
        <dbReference type="ChEBI" id="CHEBI:61723"/>
        <dbReference type="ChEBI" id="CHEBI:64479"/>
        <dbReference type="EC" id="3.1.4.14"/>
    </reaction>
</comment>
<comment type="similarity">
    <text evidence="1">Belongs to the AcpH family.</text>
</comment>
<protein>
    <recommendedName>
        <fullName evidence="1">Acyl carrier protein phosphodiesterase</fullName>
        <shortName evidence="1">ACP phosphodiesterase</shortName>
        <ecNumber evidence="1">3.1.4.14</ecNumber>
    </recommendedName>
</protein>
<proteinExistence type="inferred from homology"/>
<sequence length="193" mass="22942">MNFLAHLHLAHLAESSLSGNLLADFVRGNPEESFPPDVVAGIHMHRRIDVLTDNLPEVREAREWFRSETRRVAPITLDVMWDHFLSRHWSQLSPDFPLQEFVCYAREQVMTILPDSPPRFINLNNYLWSEQWLVRYRDMDFIQNVLNGMASRRPRLDALRDSWYDLDAHYDALETRFWQFYPRMMAQASHKAL</sequence>